<gene>
    <name evidence="1" type="primary">rplW</name>
    <name type="ordered locus">PSPTO_0628</name>
</gene>
<comment type="function">
    <text evidence="1">One of the early assembly proteins it binds 23S rRNA. One of the proteins that surrounds the polypeptide exit tunnel on the outside of the ribosome. Forms the main docking site for trigger factor binding to the ribosome.</text>
</comment>
<comment type="subunit">
    <text evidence="1">Part of the 50S ribosomal subunit. Contacts protein L29, and trigger factor when it is bound to the ribosome.</text>
</comment>
<comment type="similarity">
    <text evidence="1">Belongs to the universal ribosomal protein uL23 family.</text>
</comment>
<feature type="chain" id="PRO_0000272810" description="Large ribosomal subunit protein uL23">
    <location>
        <begin position="1"/>
        <end position="99"/>
    </location>
</feature>
<name>RL23_PSESM</name>
<accession>Q889W9</accession>
<sequence>MNQERVFKVLLGPHVSEKATVLADKKGQFVFKVATDATKLEIKKAVESLFSVKVERVTTLNVLGKSKRTARGLGKRNDWKKAVISLQPGQDLDFSSSAE</sequence>
<evidence type="ECO:0000255" key="1">
    <source>
        <dbReference type="HAMAP-Rule" id="MF_01369"/>
    </source>
</evidence>
<evidence type="ECO:0000305" key="2"/>
<proteinExistence type="inferred from homology"/>
<reference key="1">
    <citation type="journal article" date="2003" name="Proc. Natl. Acad. Sci. U.S.A.">
        <title>The complete genome sequence of the Arabidopsis and tomato pathogen Pseudomonas syringae pv. tomato DC3000.</title>
        <authorList>
            <person name="Buell C.R."/>
            <person name="Joardar V."/>
            <person name="Lindeberg M."/>
            <person name="Selengut J."/>
            <person name="Paulsen I.T."/>
            <person name="Gwinn M.L."/>
            <person name="Dodson R.J."/>
            <person name="DeBoy R.T."/>
            <person name="Durkin A.S."/>
            <person name="Kolonay J.F."/>
            <person name="Madupu R."/>
            <person name="Daugherty S.C."/>
            <person name="Brinkac L.M."/>
            <person name="Beanan M.J."/>
            <person name="Haft D.H."/>
            <person name="Nelson W.C."/>
            <person name="Davidsen T.M."/>
            <person name="Zafar N."/>
            <person name="Zhou L."/>
            <person name="Liu J."/>
            <person name="Yuan Q."/>
            <person name="Khouri H.M."/>
            <person name="Fedorova N.B."/>
            <person name="Tran B."/>
            <person name="Russell D."/>
            <person name="Berry K.J."/>
            <person name="Utterback T.R."/>
            <person name="Van Aken S.E."/>
            <person name="Feldblyum T.V."/>
            <person name="D'Ascenzo M."/>
            <person name="Deng W.-L."/>
            <person name="Ramos A.R."/>
            <person name="Alfano J.R."/>
            <person name="Cartinhour S."/>
            <person name="Chatterjee A.K."/>
            <person name="Delaney T.P."/>
            <person name="Lazarowitz S.G."/>
            <person name="Martin G.B."/>
            <person name="Schneider D.J."/>
            <person name="Tang X."/>
            <person name="Bender C.L."/>
            <person name="White O."/>
            <person name="Fraser C.M."/>
            <person name="Collmer A."/>
        </authorList>
    </citation>
    <scope>NUCLEOTIDE SEQUENCE [LARGE SCALE GENOMIC DNA]</scope>
    <source>
        <strain>ATCC BAA-871 / DC3000</strain>
    </source>
</reference>
<dbReference type="EMBL" id="AE016853">
    <property type="protein sequence ID" value="AAO54170.1"/>
    <property type="molecule type" value="Genomic_DNA"/>
</dbReference>
<dbReference type="RefSeq" id="NP_790475.1">
    <property type="nucleotide sequence ID" value="NC_004578.1"/>
</dbReference>
<dbReference type="RefSeq" id="WP_002555488.1">
    <property type="nucleotide sequence ID" value="NC_004578.1"/>
</dbReference>
<dbReference type="SMR" id="Q889W9"/>
<dbReference type="STRING" id="223283.PSPTO_0628"/>
<dbReference type="GeneID" id="98113705"/>
<dbReference type="KEGG" id="pst:PSPTO_0628"/>
<dbReference type="PATRIC" id="fig|223283.9.peg.634"/>
<dbReference type="eggNOG" id="COG0089">
    <property type="taxonomic scope" value="Bacteria"/>
</dbReference>
<dbReference type="HOGENOM" id="CLU_037562_3_1_6"/>
<dbReference type="OrthoDB" id="9793353at2"/>
<dbReference type="PhylomeDB" id="Q889W9"/>
<dbReference type="PRO" id="PR:Q889W9"/>
<dbReference type="Proteomes" id="UP000002515">
    <property type="component" value="Chromosome"/>
</dbReference>
<dbReference type="GO" id="GO:1990904">
    <property type="term" value="C:ribonucleoprotein complex"/>
    <property type="evidence" value="ECO:0007669"/>
    <property type="project" value="UniProtKB-KW"/>
</dbReference>
<dbReference type="GO" id="GO:0005840">
    <property type="term" value="C:ribosome"/>
    <property type="evidence" value="ECO:0007669"/>
    <property type="project" value="UniProtKB-KW"/>
</dbReference>
<dbReference type="GO" id="GO:0019843">
    <property type="term" value="F:rRNA binding"/>
    <property type="evidence" value="ECO:0007669"/>
    <property type="project" value="UniProtKB-UniRule"/>
</dbReference>
<dbReference type="GO" id="GO:0003735">
    <property type="term" value="F:structural constituent of ribosome"/>
    <property type="evidence" value="ECO:0007669"/>
    <property type="project" value="InterPro"/>
</dbReference>
<dbReference type="GO" id="GO:0006412">
    <property type="term" value="P:translation"/>
    <property type="evidence" value="ECO:0007669"/>
    <property type="project" value="UniProtKB-UniRule"/>
</dbReference>
<dbReference type="FunFam" id="3.30.70.330:FF:000001">
    <property type="entry name" value="50S ribosomal protein L23"/>
    <property type="match status" value="1"/>
</dbReference>
<dbReference type="Gene3D" id="3.30.70.330">
    <property type="match status" value="1"/>
</dbReference>
<dbReference type="HAMAP" id="MF_01369_B">
    <property type="entry name" value="Ribosomal_uL23_B"/>
    <property type="match status" value="1"/>
</dbReference>
<dbReference type="InterPro" id="IPR012677">
    <property type="entry name" value="Nucleotide-bd_a/b_plait_sf"/>
</dbReference>
<dbReference type="InterPro" id="IPR013025">
    <property type="entry name" value="Ribosomal_uL23-like"/>
</dbReference>
<dbReference type="InterPro" id="IPR012678">
    <property type="entry name" value="Ribosomal_uL23/eL15/eS24_sf"/>
</dbReference>
<dbReference type="NCBIfam" id="NF004359">
    <property type="entry name" value="PRK05738.1-3"/>
    <property type="match status" value="1"/>
</dbReference>
<dbReference type="NCBIfam" id="NF004363">
    <property type="entry name" value="PRK05738.2-4"/>
    <property type="match status" value="1"/>
</dbReference>
<dbReference type="PANTHER" id="PTHR11620">
    <property type="entry name" value="60S RIBOSOMAL PROTEIN L23A"/>
    <property type="match status" value="1"/>
</dbReference>
<dbReference type="Pfam" id="PF00276">
    <property type="entry name" value="Ribosomal_L23"/>
    <property type="match status" value="1"/>
</dbReference>
<dbReference type="SUPFAM" id="SSF54189">
    <property type="entry name" value="Ribosomal proteins S24e, L23 and L15e"/>
    <property type="match status" value="1"/>
</dbReference>
<organism>
    <name type="scientific">Pseudomonas syringae pv. tomato (strain ATCC BAA-871 / DC3000)</name>
    <dbReference type="NCBI Taxonomy" id="223283"/>
    <lineage>
        <taxon>Bacteria</taxon>
        <taxon>Pseudomonadati</taxon>
        <taxon>Pseudomonadota</taxon>
        <taxon>Gammaproteobacteria</taxon>
        <taxon>Pseudomonadales</taxon>
        <taxon>Pseudomonadaceae</taxon>
        <taxon>Pseudomonas</taxon>
    </lineage>
</organism>
<protein>
    <recommendedName>
        <fullName evidence="1">Large ribosomal subunit protein uL23</fullName>
    </recommendedName>
    <alternativeName>
        <fullName evidence="2">50S ribosomal protein L23</fullName>
    </alternativeName>
</protein>
<keyword id="KW-1185">Reference proteome</keyword>
<keyword id="KW-0687">Ribonucleoprotein</keyword>
<keyword id="KW-0689">Ribosomal protein</keyword>
<keyword id="KW-0694">RNA-binding</keyword>
<keyword id="KW-0699">rRNA-binding</keyword>